<reference key="1">
    <citation type="journal article" date="2005" name="Nature">
        <title>The DNA sequence of the human X chromosome.</title>
        <authorList>
            <person name="Ross M.T."/>
            <person name="Grafham D.V."/>
            <person name="Coffey A.J."/>
            <person name="Scherer S."/>
            <person name="McLay K."/>
            <person name="Muzny D."/>
            <person name="Platzer M."/>
            <person name="Howell G.R."/>
            <person name="Burrows C."/>
            <person name="Bird C.P."/>
            <person name="Frankish A."/>
            <person name="Lovell F.L."/>
            <person name="Howe K.L."/>
            <person name="Ashurst J.L."/>
            <person name="Fulton R.S."/>
            <person name="Sudbrak R."/>
            <person name="Wen G."/>
            <person name="Jones M.C."/>
            <person name="Hurles M.E."/>
            <person name="Andrews T.D."/>
            <person name="Scott C.E."/>
            <person name="Searle S."/>
            <person name="Ramser J."/>
            <person name="Whittaker A."/>
            <person name="Deadman R."/>
            <person name="Carter N.P."/>
            <person name="Hunt S.E."/>
            <person name="Chen R."/>
            <person name="Cree A."/>
            <person name="Gunaratne P."/>
            <person name="Havlak P."/>
            <person name="Hodgson A."/>
            <person name="Metzker M.L."/>
            <person name="Richards S."/>
            <person name="Scott G."/>
            <person name="Steffen D."/>
            <person name="Sodergren E."/>
            <person name="Wheeler D.A."/>
            <person name="Worley K.C."/>
            <person name="Ainscough R."/>
            <person name="Ambrose K.D."/>
            <person name="Ansari-Lari M.A."/>
            <person name="Aradhya S."/>
            <person name="Ashwell R.I."/>
            <person name="Babbage A.K."/>
            <person name="Bagguley C.L."/>
            <person name="Ballabio A."/>
            <person name="Banerjee R."/>
            <person name="Barker G.E."/>
            <person name="Barlow K.F."/>
            <person name="Barrett I.P."/>
            <person name="Bates K.N."/>
            <person name="Beare D.M."/>
            <person name="Beasley H."/>
            <person name="Beasley O."/>
            <person name="Beck A."/>
            <person name="Bethel G."/>
            <person name="Blechschmidt K."/>
            <person name="Brady N."/>
            <person name="Bray-Allen S."/>
            <person name="Bridgeman A.M."/>
            <person name="Brown A.J."/>
            <person name="Brown M.J."/>
            <person name="Bonnin D."/>
            <person name="Bruford E.A."/>
            <person name="Buhay C."/>
            <person name="Burch P."/>
            <person name="Burford D."/>
            <person name="Burgess J."/>
            <person name="Burrill W."/>
            <person name="Burton J."/>
            <person name="Bye J.M."/>
            <person name="Carder C."/>
            <person name="Carrel L."/>
            <person name="Chako J."/>
            <person name="Chapman J.C."/>
            <person name="Chavez D."/>
            <person name="Chen E."/>
            <person name="Chen G."/>
            <person name="Chen Y."/>
            <person name="Chen Z."/>
            <person name="Chinault C."/>
            <person name="Ciccodicola A."/>
            <person name="Clark S.Y."/>
            <person name="Clarke G."/>
            <person name="Clee C.M."/>
            <person name="Clegg S."/>
            <person name="Clerc-Blankenburg K."/>
            <person name="Clifford K."/>
            <person name="Cobley V."/>
            <person name="Cole C.G."/>
            <person name="Conquer J.S."/>
            <person name="Corby N."/>
            <person name="Connor R.E."/>
            <person name="David R."/>
            <person name="Davies J."/>
            <person name="Davis C."/>
            <person name="Davis J."/>
            <person name="Delgado O."/>
            <person name="Deshazo D."/>
            <person name="Dhami P."/>
            <person name="Ding Y."/>
            <person name="Dinh H."/>
            <person name="Dodsworth S."/>
            <person name="Draper H."/>
            <person name="Dugan-Rocha S."/>
            <person name="Dunham A."/>
            <person name="Dunn M."/>
            <person name="Durbin K.J."/>
            <person name="Dutta I."/>
            <person name="Eades T."/>
            <person name="Ellwood M."/>
            <person name="Emery-Cohen A."/>
            <person name="Errington H."/>
            <person name="Evans K.L."/>
            <person name="Faulkner L."/>
            <person name="Francis F."/>
            <person name="Frankland J."/>
            <person name="Fraser A.E."/>
            <person name="Galgoczy P."/>
            <person name="Gilbert J."/>
            <person name="Gill R."/>
            <person name="Gloeckner G."/>
            <person name="Gregory S.G."/>
            <person name="Gribble S."/>
            <person name="Griffiths C."/>
            <person name="Grocock R."/>
            <person name="Gu Y."/>
            <person name="Gwilliam R."/>
            <person name="Hamilton C."/>
            <person name="Hart E.A."/>
            <person name="Hawes A."/>
            <person name="Heath P.D."/>
            <person name="Heitmann K."/>
            <person name="Hennig S."/>
            <person name="Hernandez J."/>
            <person name="Hinzmann B."/>
            <person name="Ho S."/>
            <person name="Hoffs M."/>
            <person name="Howden P.J."/>
            <person name="Huckle E.J."/>
            <person name="Hume J."/>
            <person name="Hunt P.J."/>
            <person name="Hunt A.R."/>
            <person name="Isherwood J."/>
            <person name="Jacob L."/>
            <person name="Johnson D."/>
            <person name="Jones S."/>
            <person name="de Jong P.J."/>
            <person name="Joseph S.S."/>
            <person name="Keenan S."/>
            <person name="Kelly S."/>
            <person name="Kershaw J.K."/>
            <person name="Khan Z."/>
            <person name="Kioschis P."/>
            <person name="Klages S."/>
            <person name="Knights A.J."/>
            <person name="Kosiura A."/>
            <person name="Kovar-Smith C."/>
            <person name="Laird G.K."/>
            <person name="Langford C."/>
            <person name="Lawlor S."/>
            <person name="Leversha M."/>
            <person name="Lewis L."/>
            <person name="Liu W."/>
            <person name="Lloyd C."/>
            <person name="Lloyd D.M."/>
            <person name="Loulseged H."/>
            <person name="Loveland J.E."/>
            <person name="Lovell J.D."/>
            <person name="Lozado R."/>
            <person name="Lu J."/>
            <person name="Lyne R."/>
            <person name="Ma J."/>
            <person name="Maheshwari M."/>
            <person name="Matthews L.H."/>
            <person name="McDowall J."/>
            <person name="McLaren S."/>
            <person name="McMurray A."/>
            <person name="Meidl P."/>
            <person name="Meitinger T."/>
            <person name="Milne S."/>
            <person name="Miner G."/>
            <person name="Mistry S.L."/>
            <person name="Morgan M."/>
            <person name="Morris S."/>
            <person name="Mueller I."/>
            <person name="Mullikin J.C."/>
            <person name="Nguyen N."/>
            <person name="Nordsiek G."/>
            <person name="Nyakatura G."/>
            <person name="O'dell C.N."/>
            <person name="Okwuonu G."/>
            <person name="Palmer S."/>
            <person name="Pandian R."/>
            <person name="Parker D."/>
            <person name="Parrish J."/>
            <person name="Pasternak S."/>
            <person name="Patel D."/>
            <person name="Pearce A.V."/>
            <person name="Pearson D.M."/>
            <person name="Pelan S.E."/>
            <person name="Perez L."/>
            <person name="Porter K.M."/>
            <person name="Ramsey Y."/>
            <person name="Reichwald K."/>
            <person name="Rhodes S."/>
            <person name="Ridler K.A."/>
            <person name="Schlessinger D."/>
            <person name="Schueler M.G."/>
            <person name="Sehra H.K."/>
            <person name="Shaw-Smith C."/>
            <person name="Shen H."/>
            <person name="Sheridan E.M."/>
            <person name="Shownkeen R."/>
            <person name="Skuce C.D."/>
            <person name="Smith M.L."/>
            <person name="Sotheran E.C."/>
            <person name="Steingruber H.E."/>
            <person name="Steward C.A."/>
            <person name="Storey R."/>
            <person name="Swann R.M."/>
            <person name="Swarbreck D."/>
            <person name="Tabor P.E."/>
            <person name="Taudien S."/>
            <person name="Taylor T."/>
            <person name="Teague B."/>
            <person name="Thomas K."/>
            <person name="Thorpe A."/>
            <person name="Timms K."/>
            <person name="Tracey A."/>
            <person name="Trevanion S."/>
            <person name="Tromans A.C."/>
            <person name="d'Urso M."/>
            <person name="Verduzco D."/>
            <person name="Villasana D."/>
            <person name="Waldron L."/>
            <person name="Wall M."/>
            <person name="Wang Q."/>
            <person name="Warren J."/>
            <person name="Warry G.L."/>
            <person name="Wei X."/>
            <person name="West A."/>
            <person name="Whitehead S.L."/>
            <person name="Whiteley M.N."/>
            <person name="Wilkinson J.E."/>
            <person name="Willey D.L."/>
            <person name="Williams G."/>
            <person name="Williams L."/>
            <person name="Williamson A."/>
            <person name="Williamson H."/>
            <person name="Wilming L."/>
            <person name="Woodmansey R.L."/>
            <person name="Wray P.W."/>
            <person name="Yen J."/>
            <person name="Zhang J."/>
            <person name="Zhou J."/>
            <person name="Zoghbi H."/>
            <person name="Zorilla S."/>
            <person name="Buck D."/>
            <person name="Reinhardt R."/>
            <person name="Poustka A."/>
            <person name="Rosenthal A."/>
            <person name="Lehrach H."/>
            <person name="Meindl A."/>
            <person name="Minx P.J."/>
            <person name="Hillier L.W."/>
            <person name="Willard H.F."/>
            <person name="Wilson R.K."/>
            <person name="Waterston R.H."/>
            <person name="Rice C.M."/>
            <person name="Vaudin M."/>
            <person name="Coulson A."/>
            <person name="Nelson D.L."/>
            <person name="Weinstock G."/>
            <person name="Sulston J.E."/>
            <person name="Durbin R.M."/>
            <person name="Hubbard T."/>
            <person name="Gibbs R.A."/>
            <person name="Beck S."/>
            <person name="Rogers J."/>
            <person name="Bentley D.R."/>
        </authorList>
    </citation>
    <scope>NUCLEOTIDE SEQUENCE [LARGE SCALE GENOMIC DNA]</scope>
</reference>
<reference key="2">
    <citation type="journal article" date="2004" name="Nat. Genet.">
        <title>Complete sequencing and characterization of 21,243 full-length human cDNAs.</title>
        <authorList>
            <person name="Ota T."/>
            <person name="Suzuki Y."/>
            <person name="Nishikawa T."/>
            <person name="Otsuki T."/>
            <person name="Sugiyama T."/>
            <person name="Irie R."/>
            <person name="Wakamatsu A."/>
            <person name="Hayashi K."/>
            <person name="Sato H."/>
            <person name="Nagai K."/>
            <person name="Kimura K."/>
            <person name="Makita H."/>
            <person name="Sekine M."/>
            <person name="Obayashi M."/>
            <person name="Nishi T."/>
            <person name="Shibahara T."/>
            <person name="Tanaka T."/>
            <person name="Ishii S."/>
            <person name="Yamamoto J."/>
            <person name="Saito K."/>
            <person name="Kawai Y."/>
            <person name="Isono Y."/>
            <person name="Nakamura Y."/>
            <person name="Nagahari K."/>
            <person name="Murakami K."/>
            <person name="Yasuda T."/>
            <person name="Iwayanagi T."/>
            <person name="Wagatsuma M."/>
            <person name="Shiratori A."/>
            <person name="Sudo H."/>
            <person name="Hosoiri T."/>
            <person name="Kaku Y."/>
            <person name="Kodaira H."/>
            <person name="Kondo H."/>
            <person name="Sugawara M."/>
            <person name="Takahashi M."/>
            <person name="Kanda K."/>
            <person name="Yokoi T."/>
            <person name="Furuya T."/>
            <person name="Kikkawa E."/>
            <person name="Omura Y."/>
            <person name="Abe K."/>
            <person name="Kamihara K."/>
            <person name="Katsuta N."/>
            <person name="Sato K."/>
            <person name="Tanikawa M."/>
            <person name="Yamazaki M."/>
            <person name="Ninomiya K."/>
            <person name="Ishibashi T."/>
            <person name="Yamashita H."/>
            <person name="Murakawa K."/>
            <person name="Fujimori K."/>
            <person name="Tanai H."/>
            <person name="Kimata M."/>
            <person name="Watanabe M."/>
            <person name="Hiraoka S."/>
            <person name="Chiba Y."/>
            <person name="Ishida S."/>
            <person name="Ono Y."/>
            <person name="Takiguchi S."/>
            <person name="Watanabe S."/>
            <person name="Yosida M."/>
            <person name="Hotuta T."/>
            <person name="Kusano J."/>
            <person name="Kanehori K."/>
            <person name="Takahashi-Fujii A."/>
            <person name="Hara H."/>
            <person name="Tanase T.-O."/>
            <person name="Nomura Y."/>
            <person name="Togiya S."/>
            <person name="Komai F."/>
            <person name="Hara R."/>
            <person name="Takeuchi K."/>
            <person name="Arita M."/>
            <person name="Imose N."/>
            <person name="Musashino K."/>
            <person name="Yuuki H."/>
            <person name="Oshima A."/>
            <person name="Sasaki N."/>
            <person name="Aotsuka S."/>
            <person name="Yoshikawa Y."/>
            <person name="Matsunawa H."/>
            <person name="Ichihara T."/>
            <person name="Shiohata N."/>
            <person name="Sano S."/>
            <person name="Moriya S."/>
            <person name="Momiyama H."/>
            <person name="Satoh N."/>
            <person name="Takami S."/>
            <person name="Terashima Y."/>
            <person name="Suzuki O."/>
            <person name="Nakagawa S."/>
            <person name="Senoh A."/>
            <person name="Mizoguchi H."/>
            <person name="Goto Y."/>
            <person name="Shimizu F."/>
            <person name="Wakebe H."/>
            <person name="Hishigaki H."/>
            <person name="Watanabe T."/>
            <person name="Sugiyama A."/>
            <person name="Takemoto M."/>
            <person name="Kawakami B."/>
            <person name="Yamazaki M."/>
            <person name="Watanabe K."/>
            <person name="Kumagai A."/>
            <person name="Itakura S."/>
            <person name="Fukuzumi Y."/>
            <person name="Fujimori Y."/>
            <person name="Komiyama M."/>
            <person name="Tashiro H."/>
            <person name="Tanigami A."/>
            <person name="Fujiwara T."/>
            <person name="Ono T."/>
            <person name="Yamada K."/>
            <person name="Fujii Y."/>
            <person name="Ozaki K."/>
            <person name="Hirao M."/>
            <person name="Ohmori Y."/>
            <person name="Kawabata A."/>
            <person name="Hikiji T."/>
            <person name="Kobatake N."/>
            <person name="Inagaki H."/>
            <person name="Ikema Y."/>
            <person name="Okamoto S."/>
            <person name="Okitani R."/>
            <person name="Kawakami T."/>
            <person name="Noguchi S."/>
            <person name="Itoh T."/>
            <person name="Shigeta K."/>
            <person name="Senba T."/>
            <person name="Matsumura K."/>
            <person name="Nakajima Y."/>
            <person name="Mizuno T."/>
            <person name="Morinaga M."/>
            <person name="Sasaki M."/>
            <person name="Togashi T."/>
            <person name="Oyama M."/>
            <person name="Hata H."/>
            <person name="Watanabe M."/>
            <person name="Komatsu T."/>
            <person name="Mizushima-Sugano J."/>
            <person name="Satoh T."/>
            <person name="Shirai Y."/>
            <person name="Takahashi Y."/>
            <person name="Nakagawa K."/>
            <person name="Okumura K."/>
            <person name="Nagase T."/>
            <person name="Nomura N."/>
            <person name="Kikuchi H."/>
            <person name="Masuho Y."/>
            <person name="Yamashita R."/>
            <person name="Nakai K."/>
            <person name="Yada T."/>
            <person name="Nakamura Y."/>
            <person name="Ohara O."/>
            <person name="Isogai T."/>
            <person name="Sugano S."/>
        </authorList>
    </citation>
    <scope>NUCLEOTIDE SEQUENCE [LARGE SCALE MRNA] OF 77-1035</scope>
    <source>
        <tissue>Testis</tissue>
    </source>
</reference>
<organism>
    <name type="scientific">Homo sapiens</name>
    <name type="common">Human</name>
    <dbReference type="NCBI Taxonomy" id="9606"/>
    <lineage>
        <taxon>Eukaryota</taxon>
        <taxon>Metazoa</taxon>
        <taxon>Chordata</taxon>
        <taxon>Craniata</taxon>
        <taxon>Vertebrata</taxon>
        <taxon>Euteleostomi</taxon>
        <taxon>Mammalia</taxon>
        <taxon>Eutheria</taxon>
        <taxon>Euarchontoglires</taxon>
        <taxon>Primates</taxon>
        <taxon>Haplorrhini</taxon>
        <taxon>Catarrhini</taxon>
        <taxon>Hominidae</taxon>
        <taxon>Homo</taxon>
    </lineage>
</organism>
<evidence type="ECO:0000256" key="1">
    <source>
        <dbReference type="SAM" id="MobiDB-lite"/>
    </source>
</evidence>
<evidence type="ECO:0000305" key="2"/>
<sequence length="1035" mass="115338">MGDQRPQDRPSSPGMDSTPWYCDKPPSKYFAKRKHRRLRFPPVDTQNWVFVTEGMDDFRYGCQSPEDTLVCRRDEFLLPKISLRGPQADPKSRKKKLLKKAALFSKLSPAQPARKAFVEEVEAQLMTKHPLAMYPNLGEDMPPDLLLQVLKPLDPERKLEDAGSCEGQEKTTDEPTEPGKYPCGEFSPRPPETRVSCLPPEPPKTPVSSLRPEPPETGVSHLRPQPPKTQVSSLHLEPPETGVSHLRPEPPKTQVSSLHLEPPETGVSHLYLEPPGTGVSHLCPEPPKTRVSHLHREPPETGVPDLCLEPPKSRVSHLRPEPSETGVSHLHPEPPKTLVSSLHPEPPETGVSHLCPEPPETRVSPLRQLPPEAGVSHLCPEPPKTRVPPLRPETPKNGVSPLFPEPPKTRISNLRSEPPKIGVSHLCLEPPKTRGSHLRPEPPETGVSHLRPEPPKTRVSSLHLEPPETGVSHLCPEPPEKDVSHLRPEPPDTGVSHLCPEPPKTRVSHLRPEPSETGVSHLRPEPPKILVSSLHQAPPESSVSHLRPEPPETGVSHLRPEPPKTRMYSLRPEPPDTGVSHLCPEPPKTRVSSLPPEPPETGVSHLCPEPPETRVSHLRPEPPETGVSHLRPEPPKTRMYSLRPEPPNTGVSHLCPEPPKTRVSSLPPEPPETGVSHLCPEPPETRVSHLRPEPPETGVSRLHPEPPKTRVSSLHAEPPESRVSHLCPEPPETGVSHLRPEPPKPRVSSLRPEPLETRVSHLRPEPPETGVSHLHPELPKPRVSSLHLEPPKTRRVSSLRLEPPKTGRVSSLCPEPTKTGASHLKELFQEGTSSTMECVSDSLQRRHTSRKLRDFKWAGDLGVNEESISSLFDFTPECRATYQDQKNKKANECSSGLKYSMELDEMDEVKFFSQEKDLDGKIQNAPNSHSAQHVKMGYGAWYLKPKLGKKLRSDEPLIDPKLVLEKPDEPDILDGLYGPIAFKDFILSKGYEMPGIIQRLFARRGWTYDSVKTPIQRAMQVYKYKEDVTDASEED</sequence>
<comment type="similarity">
    <text evidence="2">Belongs to the FAM47 family.</text>
</comment>
<comment type="sequence caution" evidence="2">
    <conflict type="erroneous initiation">
        <sequence resource="EMBL-CDS" id="BAC86381"/>
    </conflict>
</comment>
<dbReference type="EMBL" id="BX842568">
    <property type="status" value="NOT_ANNOTATED_CDS"/>
    <property type="molecule type" value="Genomic_DNA"/>
</dbReference>
<dbReference type="EMBL" id="AK125992">
    <property type="protein sequence ID" value="BAC86381.1"/>
    <property type="status" value="ALT_INIT"/>
    <property type="molecule type" value="mRNA"/>
</dbReference>
<dbReference type="CCDS" id="CCDS35227.1"/>
<dbReference type="RefSeq" id="NP_001013758.1">
    <property type="nucleotide sequence ID" value="NM_001013736.3"/>
</dbReference>
<dbReference type="BioGRID" id="138312">
    <property type="interactions" value="1"/>
</dbReference>
<dbReference type="STRING" id="9606.ENSP00000367913"/>
<dbReference type="iPTMnet" id="Q5HY64"/>
<dbReference type="PhosphoSitePlus" id="Q5HY64"/>
<dbReference type="BioMuta" id="FAM47C"/>
<dbReference type="DMDM" id="74741513"/>
<dbReference type="MassIVE" id="Q5HY64"/>
<dbReference type="PaxDb" id="9606-ENSP00000367913"/>
<dbReference type="PeptideAtlas" id="Q5HY64"/>
<dbReference type="DNASU" id="442444"/>
<dbReference type="Ensembl" id="ENST00000358047.5">
    <property type="protein sequence ID" value="ENSP00000367913.3"/>
    <property type="gene ID" value="ENSG00000198173.5"/>
</dbReference>
<dbReference type="GeneID" id="442444"/>
<dbReference type="KEGG" id="hsa:442444"/>
<dbReference type="MANE-Select" id="ENST00000358047.5">
    <property type="protein sequence ID" value="ENSP00000367913.3"/>
    <property type="RefSeq nucleotide sequence ID" value="NM_001013736.3"/>
    <property type="RefSeq protein sequence ID" value="NP_001013758.1"/>
</dbReference>
<dbReference type="UCSC" id="uc004ddl.3">
    <property type="organism name" value="human"/>
</dbReference>
<dbReference type="AGR" id="HGNC:25301"/>
<dbReference type="CTD" id="442444"/>
<dbReference type="DisGeNET" id="442444"/>
<dbReference type="GeneCards" id="FAM47C"/>
<dbReference type="HGNC" id="HGNC:25301">
    <property type="gene designation" value="FAM47C"/>
</dbReference>
<dbReference type="HPA" id="ENSG00000198173">
    <property type="expression patterns" value="Tissue enriched (testis)"/>
</dbReference>
<dbReference type="MIM" id="301067">
    <property type="type" value="gene"/>
</dbReference>
<dbReference type="neXtProt" id="NX_Q5HY64"/>
<dbReference type="OpenTargets" id="ENSG00000198173"/>
<dbReference type="PharmGKB" id="PA145148924"/>
<dbReference type="VEuPathDB" id="HostDB:ENSG00000198173"/>
<dbReference type="eggNOG" id="ENOG502SEIG">
    <property type="taxonomic scope" value="Eukaryota"/>
</dbReference>
<dbReference type="GeneTree" id="ENSGT00940000163970"/>
<dbReference type="HOGENOM" id="CLU_325693_0_0_1"/>
<dbReference type="InParanoid" id="Q5HY64"/>
<dbReference type="OMA" id="FTPECKA"/>
<dbReference type="OrthoDB" id="9530753at2759"/>
<dbReference type="PAN-GO" id="Q5HY64">
    <property type="GO annotations" value="0 GO annotations based on evolutionary models"/>
</dbReference>
<dbReference type="PhylomeDB" id="Q5HY64"/>
<dbReference type="TreeFam" id="TF340932"/>
<dbReference type="PathwayCommons" id="Q5HY64"/>
<dbReference type="BioGRID-ORCS" id="442444">
    <property type="hits" value="13 hits in 761 CRISPR screens"/>
</dbReference>
<dbReference type="GenomeRNAi" id="442444"/>
<dbReference type="Pharos" id="Q5HY64">
    <property type="development level" value="Tdark"/>
</dbReference>
<dbReference type="PRO" id="PR:Q5HY64"/>
<dbReference type="Proteomes" id="UP000005640">
    <property type="component" value="Chromosome X"/>
</dbReference>
<dbReference type="RNAct" id="Q5HY64">
    <property type="molecule type" value="protein"/>
</dbReference>
<dbReference type="Bgee" id="ENSG00000198173">
    <property type="expression patterns" value="Expressed in sperm and 6 other cell types or tissues"/>
</dbReference>
<dbReference type="InterPro" id="IPR032743">
    <property type="entry name" value="FAM47"/>
</dbReference>
<dbReference type="PANTHER" id="PTHR47415">
    <property type="entry name" value="PROTEIN FAM47B"/>
    <property type="match status" value="1"/>
</dbReference>
<dbReference type="PANTHER" id="PTHR47415:SF2">
    <property type="entry name" value="PROTEIN FAM47C-RELATED"/>
    <property type="match status" value="1"/>
</dbReference>
<dbReference type="Pfam" id="PF14642">
    <property type="entry name" value="FAM47"/>
    <property type="match status" value="10"/>
</dbReference>
<feature type="chain" id="PRO_0000349311" description="Putative protein FAM47C">
    <location>
        <begin position="1"/>
        <end position="1035"/>
    </location>
</feature>
<feature type="region of interest" description="Disordered" evidence="1">
    <location>
        <begin position="1"/>
        <end position="21"/>
    </location>
</feature>
<feature type="region of interest" description="Disordered" evidence="1">
    <location>
        <begin position="159"/>
        <end position="797"/>
    </location>
</feature>
<feature type="compositionally biased region" description="Basic and acidic residues" evidence="1">
    <location>
        <begin position="159"/>
        <end position="173"/>
    </location>
</feature>
<feature type="compositionally biased region" description="Pro residues" evidence="1">
    <location>
        <begin position="380"/>
        <end position="392"/>
    </location>
</feature>
<feature type="compositionally biased region" description="Basic and acidic residues" evidence="1">
    <location>
        <begin position="478"/>
        <end position="490"/>
    </location>
</feature>
<feature type="compositionally biased region" description="Polar residues" evidence="1">
    <location>
        <begin position="533"/>
        <end position="544"/>
    </location>
</feature>
<feature type="compositionally biased region" description="Basic and acidic residues" evidence="1">
    <location>
        <begin position="611"/>
        <end position="622"/>
    </location>
</feature>
<feature type="compositionally biased region" description="Basic and acidic residues" evidence="1">
    <location>
        <begin position="683"/>
        <end position="694"/>
    </location>
</feature>
<feature type="compositionally biased region" description="Basic and acidic residues" evidence="1">
    <location>
        <begin position="753"/>
        <end position="766"/>
    </location>
</feature>
<feature type="sequence variant" id="VAR_046358" description="In dbSNP:rs1995914.">
    <original>N</original>
    <variation>T</variation>
    <location>
        <position position="924"/>
    </location>
</feature>
<feature type="sequence conflict" description="In Ref. 2; BAC86381." evidence="2" ref="2">
    <original>P</original>
    <variation>S</variation>
    <location>
        <position position="275"/>
    </location>
</feature>
<feature type="sequence conflict" description="In Ref. 2; BAC86381." evidence="2" ref="2">
    <original>D</original>
    <variation>N</variation>
    <location>
        <position position="482"/>
    </location>
</feature>
<keyword id="KW-1267">Proteomics identification</keyword>
<keyword id="KW-1185">Reference proteome</keyword>
<protein>
    <recommendedName>
        <fullName>Putative protein FAM47C</fullName>
    </recommendedName>
</protein>
<gene>
    <name type="primary">FAM47C</name>
</gene>
<proteinExistence type="evidence at protein level"/>
<accession>Q5HY64</accession>
<accession>Q6ZU46</accession>
<name>FA47C_HUMAN</name>